<feature type="chain" id="PRO_0000184813" description="3-methyl-2-oxobutanoate hydroxymethyltransferase">
    <location>
        <begin position="1"/>
        <end position="279"/>
    </location>
</feature>
<feature type="active site" description="Proton acceptor" evidence="1">
    <location>
        <position position="181"/>
    </location>
</feature>
<feature type="binding site" evidence="1">
    <location>
        <begin position="43"/>
        <end position="44"/>
    </location>
    <ligand>
        <name>3-methyl-2-oxobutanoate</name>
        <dbReference type="ChEBI" id="CHEBI:11851"/>
    </ligand>
</feature>
<feature type="binding site" evidence="1">
    <location>
        <position position="43"/>
    </location>
    <ligand>
        <name>Mg(2+)</name>
        <dbReference type="ChEBI" id="CHEBI:18420"/>
    </ligand>
</feature>
<feature type="binding site" evidence="1">
    <location>
        <position position="82"/>
    </location>
    <ligand>
        <name>3-methyl-2-oxobutanoate</name>
        <dbReference type="ChEBI" id="CHEBI:11851"/>
    </ligand>
</feature>
<feature type="binding site" evidence="1">
    <location>
        <position position="82"/>
    </location>
    <ligand>
        <name>Mg(2+)</name>
        <dbReference type="ChEBI" id="CHEBI:18420"/>
    </ligand>
</feature>
<feature type="binding site" evidence="1">
    <location>
        <position position="112"/>
    </location>
    <ligand>
        <name>3-methyl-2-oxobutanoate</name>
        <dbReference type="ChEBI" id="CHEBI:11851"/>
    </ligand>
</feature>
<feature type="binding site" evidence="1">
    <location>
        <position position="114"/>
    </location>
    <ligand>
        <name>Mg(2+)</name>
        <dbReference type="ChEBI" id="CHEBI:18420"/>
    </ligand>
</feature>
<evidence type="ECO:0000255" key="1">
    <source>
        <dbReference type="HAMAP-Rule" id="MF_00156"/>
    </source>
</evidence>
<proteinExistence type="inferred from homology"/>
<keyword id="KW-0963">Cytoplasm</keyword>
<keyword id="KW-0460">Magnesium</keyword>
<keyword id="KW-0479">Metal-binding</keyword>
<keyword id="KW-0566">Pantothenate biosynthesis</keyword>
<keyword id="KW-1185">Reference proteome</keyword>
<keyword id="KW-0808">Transferase</keyword>
<protein>
    <recommendedName>
        <fullName evidence="1">3-methyl-2-oxobutanoate hydroxymethyltransferase</fullName>
        <ecNumber evidence="1">2.1.2.11</ecNumber>
    </recommendedName>
    <alternativeName>
        <fullName evidence="1">Ketopantoate hydroxymethyltransferase</fullName>
        <shortName evidence="1">KPHMT</shortName>
    </alternativeName>
</protein>
<sequence>MKTTASFKKMKQQKEKIAMMTAYDAPSARLVEDADVDMILVGDSLGMVVLGYDSTIPVTLDDMIHHTKAVKRGAKNTFIVTDMPYLTYHGSFNETLVGAKRLMQEAGADALKLEGNGDIIDTIERLTLAGVPIVAHLGLTPQNVAVEGGYRVQAKDAKSAKQLLADAKAVEAAGAFALVLECVPEQVATQISEELTIPVIGIGAGAGCDGQVLVYHDVIGYGAGHVPSFVKQYVNITKPIEEAMKQYVQEVKAGTFPDKDHAFSLKENVIQELYGGALT</sequence>
<organism>
    <name type="scientific">Halalkalibacterium halodurans (strain ATCC BAA-125 / DSM 18197 / FERM 7344 / JCM 9153 / C-125)</name>
    <name type="common">Bacillus halodurans</name>
    <dbReference type="NCBI Taxonomy" id="272558"/>
    <lineage>
        <taxon>Bacteria</taxon>
        <taxon>Bacillati</taxon>
        <taxon>Bacillota</taxon>
        <taxon>Bacilli</taxon>
        <taxon>Bacillales</taxon>
        <taxon>Bacillaceae</taxon>
        <taxon>Halalkalibacterium (ex Joshi et al. 2022)</taxon>
    </lineage>
</organism>
<comment type="function">
    <text evidence="1">Catalyzes the reversible reaction in which hydroxymethyl group from 5,10-methylenetetrahydrofolate is transferred onto alpha-ketoisovalerate to form ketopantoate.</text>
</comment>
<comment type="catalytic activity">
    <reaction evidence="1">
        <text>3-methyl-2-oxobutanoate + (6R)-5,10-methylene-5,6,7,8-tetrahydrofolate + H2O = 2-dehydropantoate + (6S)-5,6,7,8-tetrahydrofolate</text>
        <dbReference type="Rhea" id="RHEA:11824"/>
        <dbReference type="ChEBI" id="CHEBI:11561"/>
        <dbReference type="ChEBI" id="CHEBI:11851"/>
        <dbReference type="ChEBI" id="CHEBI:15377"/>
        <dbReference type="ChEBI" id="CHEBI:15636"/>
        <dbReference type="ChEBI" id="CHEBI:57453"/>
        <dbReference type="EC" id="2.1.2.11"/>
    </reaction>
</comment>
<comment type="cofactor">
    <cofactor evidence="1">
        <name>Mg(2+)</name>
        <dbReference type="ChEBI" id="CHEBI:18420"/>
    </cofactor>
    <text evidence="1">Binds 1 Mg(2+) ion per subunit.</text>
</comment>
<comment type="pathway">
    <text evidence="1">Cofactor biosynthesis; (R)-pantothenate biosynthesis; (R)-pantoate from 3-methyl-2-oxobutanoate: step 1/2.</text>
</comment>
<comment type="subunit">
    <text evidence="1">Homodecamer; pentamer of dimers.</text>
</comment>
<comment type="subcellular location">
    <subcellularLocation>
        <location evidence="1">Cytoplasm</location>
    </subcellularLocation>
</comment>
<comment type="similarity">
    <text evidence="1">Belongs to the PanB family.</text>
</comment>
<dbReference type="EC" id="2.1.2.11" evidence="1"/>
<dbReference type="EMBL" id="BA000004">
    <property type="protein sequence ID" value="BAB05406.1"/>
    <property type="molecule type" value="Genomic_DNA"/>
</dbReference>
<dbReference type="PIR" id="G83860">
    <property type="entry name" value="G83860"/>
</dbReference>
<dbReference type="RefSeq" id="WP_010897848.1">
    <property type="nucleotide sequence ID" value="NC_002570.2"/>
</dbReference>
<dbReference type="SMR" id="Q9KC87"/>
<dbReference type="STRING" id="272558.gene:10727585"/>
<dbReference type="KEGG" id="bha:BH1687"/>
<dbReference type="eggNOG" id="COG0413">
    <property type="taxonomic scope" value="Bacteria"/>
</dbReference>
<dbReference type="HOGENOM" id="CLU_036645_1_0_9"/>
<dbReference type="OrthoDB" id="9781789at2"/>
<dbReference type="UniPathway" id="UPA00028">
    <property type="reaction ID" value="UER00003"/>
</dbReference>
<dbReference type="Proteomes" id="UP000001258">
    <property type="component" value="Chromosome"/>
</dbReference>
<dbReference type="GO" id="GO:0005737">
    <property type="term" value="C:cytoplasm"/>
    <property type="evidence" value="ECO:0007669"/>
    <property type="project" value="UniProtKB-SubCell"/>
</dbReference>
<dbReference type="GO" id="GO:0003864">
    <property type="term" value="F:3-methyl-2-oxobutanoate hydroxymethyltransferase activity"/>
    <property type="evidence" value="ECO:0007669"/>
    <property type="project" value="UniProtKB-UniRule"/>
</dbReference>
<dbReference type="GO" id="GO:0000287">
    <property type="term" value="F:magnesium ion binding"/>
    <property type="evidence" value="ECO:0007669"/>
    <property type="project" value="TreeGrafter"/>
</dbReference>
<dbReference type="GO" id="GO:0015940">
    <property type="term" value="P:pantothenate biosynthetic process"/>
    <property type="evidence" value="ECO:0007669"/>
    <property type="project" value="UniProtKB-UniRule"/>
</dbReference>
<dbReference type="CDD" id="cd06557">
    <property type="entry name" value="KPHMT-like"/>
    <property type="match status" value="1"/>
</dbReference>
<dbReference type="FunFam" id="3.20.20.60:FF:000003">
    <property type="entry name" value="3-methyl-2-oxobutanoate hydroxymethyltransferase"/>
    <property type="match status" value="1"/>
</dbReference>
<dbReference type="Gene3D" id="3.20.20.60">
    <property type="entry name" value="Phosphoenolpyruvate-binding domains"/>
    <property type="match status" value="1"/>
</dbReference>
<dbReference type="HAMAP" id="MF_00156">
    <property type="entry name" value="PanB"/>
    <property type="match status" value="1"/>
</dbReference>
<dbReference type="InterPro" id="IPR003700">
    <property type="entry name" value="Pantoate_hydroxy_MeTrfase"/>
</dbReference>
<dbReference type="InterPro" id="IPR015813">
    <property type="entry name" value="Pyrv/PenolPyrv_kinase-like_dom"/>
</dbReference>
<dbReference type="InterPro" id="IPR040442">
    <property type="entry name" value="Pyrv_kinase-like_dom_sf"/>
</dbReference>
<dbReference type="NCBIfam" id="TIGR00222">
    <property type="entry name" value="panB"/>
    <property type="match status" value="1"/>
</dbReference>
<dbReference type="NCBIfam" id="NF001452">
    <property type="entry name" value="PRK00311.1"/>
    <property type="match status" value="1"/>
</dbReference>
<dbReference type="PANTHER" id="PTHR20881">
    <property type="entry name" value="3-METHYL-2-OXOBUTANOATE HYDROXYMETHYLTRANSFERASE"/>
    <property type="match status" value="1"/>
</dbReference>
<dbReference type="PANTHER" id="PTHR20881:SF0">
    <property type="entry name" value="3-METHYL-2-OXOBUTANOATE HYDROXYMETHYLTRANSFERASE"/>
    <property type="match status" value="1"/>
</dbReference>
<dbReference type="Pfam" id="PF02548">
    <property type="entry name" value="Pantoate_transf"/>
    <property type="match status" value="1"/>
</dbReference>
<dbReference type="PIRSF" id="PIRSF000388">
    <property type="entry name" value="Pantoate_hydroxy_MeTrfase"/>
    <property type="match status" value="1"/>
</dbReference>
<dbReference type="SUPFAM" id="SSF51621">
    <property type="entry name" value="Phosphoenolpyruvate/pyruvate domain"/>
    <property type="match status" value="1"/>
</dbReference>
<name>PANB_HALH5</name>
<gene>
    <name evidence="1" type="primary">panB</name>
    <name type="ordered locus">BH1687</name>
</gene>
<accession>Q9KC87</accession>
<reference key="1">
    <citation type="journal article" date="2000" name="Nucleic Acids Res.">
        <title>Complete genome sequence of the alkaliphilic bacterium Bacillus halodurans and genomic sequence comparison with Bacillus subtilis.</title>
        <authorList>
            <person name="Takami H."/>
            <person name="Nakasone K."/>
            <person name="Takaki Y."/>
            <person name="Maeno G."/>
            <person name="Sasaki R."/>
            <person name="Masui N."/>
            <person name="Fuji F."/>
            <person name="Hirama C."/>
            <person name="Nakamura Y."/>
            <person name="Ogasawara N."/>
            <person name="Kuhara S."/>
            <person name="Horikoshi K."/>
        </authorList>
    </citation>
    <scope>NUCLEOTIDE SEQUENCE [LARGE SCALE GENOMIC DNA]</scope>
    <source>
        <strain>ATCC BAA-125 / DSM 18197 / FERM 7344 / JCM 9153 / C-125</strain>
    </source>
</reference>